<reference key="1">
    <citation type="journal article" date="2005" name="J. Bacteriol.">
        <title>Swine and poultry pathogens: the complete genome sequences of two strains of Mycoplasma hyopneumoniae and a strain of Mycoplasma synoviae.</title>
        <authorList>
            <person name="Vasconcelos A.T.R."/>
            <person name="Ferreira H.B."/>
            <person name="Bizarro C.V."/>
            <person name="Bonatto S.L."/>
            <person name="Carvalho M.O."/>
            <person name="Pinto P.M."/>
            <person name="Almeida D.F."/>
            <person name="Almeida L.G.P."/>
            <person name="Almeida R."/>
            <person name="Alves-Junior L."/>
            <person name="Assuncao E.N."/>
            <person name="Azevedo V.A.C."/>
            <person name="Bogo M.R."/>
            <person name="Brigido M.M."/>
            <person name="Brocchi M."/>
            <person name="Burity H.A."/>
            <person name="Camargo A.A."/>
            <person name="Camargo S.S."/>
            <person name="Carepo M.S."/>
            <person name="Carraro D.M."/>
            <person name="de Mattos Cascardo J.C."/>
            <person name="Castro L.A."/>
            <person name="Cavalcanti G."/>
            <person name="Chemale G."/>
            <person name="Collevatti R.G."/>
            <person name="Cunha C.W."/>
            <person name="Dallagiovanna B."/>
            <person name="Dambros B.P."/>
            <person name="Dellagostin O.A."/>
            <person name="Falcao C."/>
            <person name="Fantinatti-Garboggini F."/>
            <person name="Felipe M.S.S."/>
            <person name="Fiorentin L."/>
            <person name="Franco G.R."/>
            <person name="Freitas N.S.A."/>
            <person name="Frias D."/>
            <person name="Grangeiro T.B."/>
            <person name="Grisard E.C."/>
            <person name="Guimaraes C.T."/>
            <person name="Hungria M."/>
            <person name="Jardim S.N."/>
            <person name="Krieger M.A."/>
            <person name="Laurino J.P."/>
            <person name="Lima L.F.A."/>
            <person name="Lopes M.I."/>
            <person name="Loreto E.L.S."/>
            <person name="Madeira H.M.F."/>
            <person name="Manfio G.P."/>
            <person name="Maranhao A.Q."/>
            <person name="Martinkovics C.T."/>
            <person name="Medeiros S.R.B."/>
            <person name="Moreira M.A.M."/>
            <person name="Neiva M."/>
            <person name="Ramalho-Neto C.E."/>
            <person name="Nicolas M.F."/>
            <person name="Oliveira S.C."/>
            <person name="Paixao R.F.C."/>
            <person name="Pedrosa F.O."/>
            <person name="Pena S.D.J."/>
            <person name="Pereira M."/>
            <person name="Pereira-Ferrari L."/>
            <person name="Piffer I."/>
            <person name="Pinto L.S."/>
            <person name="Potrich D.P."/>
            <person name="Salim A.C.M."/>
            <person name="Santos F.R."/>
            <person name="Schmitt R."/>
            <person name="Schneider M.P.C."/>
            <person name="Schrank A."/>
            <person name="Schrank I.S."/>
            <person name="Schuck A.F."/>
            <person name="Seuanez H.N."/>
            <person name="Silva D.W."/>
            <person name="Silva R."/>
            <person name="Silva S.C."/>
            <person name="Soares C.M.A."/>
            <person name="Souza K.R.L."/>
            <person name="Souza R.C."/>
            <person name="Staats C.C."/>
            <person name="Steffens M.B.R."/>
            <person name="Teixeira S.M.R."/>
            <person name="Urmenyi T.P."/>
            <person name="Vainstein M.H."/>
            <person name="Zuccherato L.W."/>
            <person name="Simpson A.J.G."/>
            <person name="Zaha A."/>
        </authorList>
    </citation>
    <scope>NUCLEOTIDE SEQUENCE [LARGE SCALE GENOMIC DNA]</scope>
    <source>
        <strain>J / ATCC 25934 / NCTC 10110</strain>
    </source>
</reference>
<evidence type="ECO:0000255" key="1">
    <source>
        <dbReference type="HAMAP-Rule" id="MF_01347"/>
    </source>
</evidence>
<dbReference type="EC" id="7.1.2.2" evidence="1"/>
<dbReference type="EMBL" id="AE017243">
    <property type="protein sequence ID" value="AAZ44143.1"/>
    <property type="molecule type" value="Genomic_DNA"/>
</dbReference>
<dbReference type="RefSeq" id="WP_011283870.1">
    <property type="nucleotide sequence ID" value="NC_007295.1"/>
</dbReference>
<dbReference type="SMR" id="Q4AAV7"/>
<dbReference type="GeneID" id="41334337"/>
<dbReference type="KEGG" id="mhj:MHJ_0049"/>
<dbReference type="eggNOG" id="COG0055">
    <property type="taxonomic scope" value="Bacteria"/>
</dbReference>
<dbReference type="HOGENOM" id="CLU_022398_0_2_14"/>
<dbReference type="OrthoDB" id="9801639at2"/>
<dbReference type="Proteomes" id="UP000000548">
    <property type="component" value="Chromosome"/>
</dbReference>
<dbReference type="GO" id="GO:0005886">
    <property type="term" value="C:plasma membrane"/>
    <property type="evidence" value="ECO:0007669"/>
    <property type="project" value="UniProtKB-SubCell"/>
</dbReference>
<dbReference type="GO" id="GO:0045259">
    <property type="term" value="C:proton-transporting ATP synthase complex"/>
    <property type="evidence" value="ECO:0007669"/>
    <property type="project" value="UniProtKB-KW"/>
</dbReference>
<dbReference type="GO" id="GO:0005524">
    <property type="term" value="F:ATP binding"/>
    <property type="evidence" value="ECO:0007669"/>
    <property type="project" value="UniProtKB-UniRule"/>
</dbReference>
<dbReference type="GO" id="GO:0016887">
    <property type="term" value="F:ATP hydrolysis activity"/>
    <property type="evidence" value="ECO:0007669"/>
    <property type="project" value="InterPro"/>
</dbReference>
<dbReference type="GO" id="GO:0046933">
    <property type="term" value="F:proton-transporting ATP synthase activity, rotational mechanism"/>
    <property type="evidence" value="ECO:0007669"/>
    <property type="project" value="UniProtKB-UniRule"/>
</dbReference>
<dbReference type="CDD" id="cd18110">
    <property type="entry name" value="ATP-synt_F1_beta_C"/>
    <property type="match status" value="1"/>
</dbReference>
<dbReference type="CDD" id="cd18115">
    <property type="entry name" value="ATP-synt_F1_beta_N"/>
    <property type="match status" value="1"/>
</dbReference>
<dbReference type="CDD" id="cd01133">
    <property type="entry name" value="F1-ATPase_beta_CD"/>
    <property type="match status" value="1"/>
</dbReference>
<dbReference type="FunFam" id="1.10.1140.10:FF:000001">
    <property type="entry name" value="ATP synthase subunit beta"/>
    <property type="match status" value="1"/>
</dbReference>
<dbReference type="FunFam" id="3.40.50.300:FF:000004">
    <property type="entry name" value="ATP synthase subunit beta"/>
    <property type="match status" value="1"/>
</dbReference>
<dbReference type="Gene3D" id="2.40.10.170">
    <property type="match status" value="1"/>
</dbReference>
<dbReference type="Gene3D" id="1.10.1140.10">
    <property type="entry name" value="Bovine Mitochondrial F1-atpase, Atp Synthase Beta Chain, Chain D, domain 3"/>
    <property type="match status" value="1"/>
</dbReference>
<dbReference type="Gene3D" id="3.40.50.300">
    <property type="entry name" value="P-loop containing nucleotide triphosphate hydrolases"/>
    <property type="match status" value="1"/>
</dbReference>
<dbReference type="HAMAP" id="MF_01347">
    <property type="entry name" value="ATP_synth_beta_bact"/>
    <property type="match status" value="1"/>
</dbReference>
<dbReference type="InterPro" id="IPR003593">
    <property type="entry name" value="AAA+_ATPase"/>
</dbReference>
<dbReference type="InterPro" id="IPR055190">
    <property type="entry name" value="ATP-synt_VA_C"/>
</dbReference>
<dbReference type="InterPro" id="IPR005722">
    <property type="entry name" value="ATP_synth_F1_bsu"/>
</dbReference>
<dbReference type="InterPro" id="IPR020003">
    <property type="entry name" value="ATPase_a/bsu_AS"/>
</dbReference>
<dbReference type="InterPro" id="IPR050053">
    <property type="entry name" value="ATPase_alpha/beta_chains"/>
</dbReference>
<dbReference type="InterPro" id="IPR004100">
    <property type="entry name" value="ATPase_F1/V1/A1_a/bsu_N"/>
</dbReference>
<dbReference type="InterPro" id="IPR036121">
    <property type="entry name" value="ATPase_F1/V1/A1_a/bsu_N_sf"/>
</dbReference>
<dbReference type="InterPro" id="IPR000194">
    <property type="entry name" value="ATPase_F1/V1/A1_a/bsu_nucl-bd"/>
</dbReference>
<dbReference type="InterPro" id="IPR024034">
    <property type="entry name" value="ATPase_F1/V1_b/a_C"/>
</dbReference>
<dbReference type="InterPro" id="IPR027417">
    <property type="entry name" value="P-loop_NTPase"/>
</dbReference>
<dbReference type="NCBIfam" id="TIGR01039">
    <property type="entry name" value="atpD"/>
    <property type="match status" value="1"/>
</dbReference>
<dbReference type="PANTHER" id="PTHR15184">
    <property type="entry name" value="ATP SYNTHASE"/>
    <property type="match status" value="1"/>
</dbReference>
<dbReference type="PANTHER" id="PTHR15184:SF71">
    <property type="entry name" value="ATP SYNTHASE SUBUNIT BETA, MITOCHONDRIAL"/>
    <property type="match status" value="1"/>
</dbReference>
<dbReference type="Pfam" id="PF00006">
    <property type="entry name" value="ATP-synt_ab"/>
    <property type="match status" value="1"/>
</dbReference>
<dbReference type="Pfam" id="PF02874">
    <property type="entry name" value="ATP-synt_ab_N"/>
    <property type="match status" value="1"/>
</dbReference>
<dbReference type="Pfam" id="PF22919">
    <property type="entry name" value="ATP-synt_VA_C"/>
    <property type="match status" value="1"/>
</dbReference>
<dbReference type="SMART" id="SM00382">
    <property type="entry name" value="AAA"/>
    <property type="match status" value="1"/>
</dbReference>
<dbReference type="SUPFAM" id="SSF47917">
    <property type="entry name" value="C-terminal domain of alpha and beta subunits of F1 ATP synthase"/>
    <property type="match status" value="1"/>
</dbReference>
<dbReference type="SUPFAM" id="SSF50615">
    <property type="entry name" value="N-terminal domain of alpha and beta subunits of F1 ATP synthase"/>
    <property type="match status" value="1"/>
</dbReference>
<dbReference type="SUPFAM" id="SSF52540">
    <property type="entry name" value="P-loop containing nucleoside triphosphate hydrolases"/>
    <property type="match status" value="1"/>
</dbReference>
<dbReference type="PROSITE" id="PS00152">
    <property type="entry name" value="ATPASE_ALPHA_BETA"/>
    <property type="match status" value="1"/>
</dbReference>
<sequence length="471" mass="51572">MEKQKNVGHIVQIFGPVIDVQFPNEHMPAILSALEVKINDESIIFEVAQHLGEGIVRAIAMSMTYNLSKGLEVYDTGSQISVPVGKQVLSRMFNVLGQPIDGGKPLDSFIKNPIHAKAPTYLEQKATSEILVTGIKVIDLLIPFIKGGKIGLFGGAGVGKTVLVQELINNIASKHGGLSVFAGVGERSREGNDLYFEMKKAGVLDKTALVFGQMNEPPGARMRVALSALTMAEYFRDYENQDVLLFIDNIFRFTQAGSEVSTLLGRIPSTVGYQPTLSTEMGQLQERITSTIRGSITSVQAVYVPADDITDPAPATTFSHLDAKTVLDRGIAALGIYPAVDPLASSSRALEPNIVGKKHYLVAKKVVQILQRFKELQDIIAILGVDELSESDKQVVARARRIRNFLSQPFFVAQKFSGIQGQFIKIQDTVNNFDELLSGKYDNIPEEAFLYVGTIDQALEKAKKMGWSEKN</sequence>
<protein>
    <recommendedName>
        <fullName evidence="1">ATP synthase subunit beta</fullName>
        <ecNumber evidence="1">7.1.2.2</ecNumber>
    </recommendedName>
    <alternativeName>
        <fullName evidence="1">ATP synthase F1 sector subunit beta</fullName>
    </alternativeName>
    <alternativeName>
        <fullName evidence="1">F-ATPase subunit beta</fullName>
    </alternativeName>
</protein>
<organism>
    <name type="scientific">Mesomycoplasma hyopneumoniae (strain J / ATCC 25934 / NCTC 10110)</name>
    <name type="common">Mycoplasma hyopneumoniae</name>
    <dbReference type="NCBI Taxonomy" id="262719"/>
    <lineage>
        <taxon>Bacteria</taxon>
        <taxon>Bacillati</taxon>
        <taxon>Mycoplasmatota</taxon>
        <taxon>Mycoplasmoidales</taxon>
        <taxon>Metamycoplasmataceae</taxon>
        <taxon>Mesomycoplasma</taxon>
    </lineage>
</organism>
<feature type="chain" id="PRO_0000254304" description="ATP synthase subunit beta">
    <location>
        <begin position="1"/>
        <end position="471"/>
    </location>
</feature>
<feature type="binding site" evidence="1">
    <location>
        <begin position="154"/>
        <end position="161"/>
    </location>
    <ligand>
        <name>ATP</name>
        <dbReference type="ChEBI" id="CHEBI:30616"/>
    </ligand>
</feature>
<gene>
    <name evidence="1" type="primary">atpD</name>
    <name type="ordered locus">MHJ_0049</name>
</gene>
<comment type="function">
    <text evidence="1">Produces ATP from ADP in the presence of a proton gradient across the membrane. The catalytic sites are hosted primarily by the beta subunits.</text>
</comment>
<comment type="catalytic activity">
    <reaction evidence="1">
        <text>ATP + H2O + 4 H(+)(in) = ADP + phosphate + 5 H(+)(out)</text>
        <dbReference type="Rhea" id="RHEA:57720"/>
        <dbReference type="ChEBI" id="CHEBI:15377"/>
        <dbReference type="ChEBI" id="CHEBI:15378"/>
        <dbReference type="ChEBI" id="CHEBI:30616"/>
        <dbReference type="ChEBI" id="CHEBI:43474"/>
        <dbReference type="ChEBI" id="CHEBI:456216"/>
        <dbReference type="EC" id="7.1.2.2"/>
    </reaction>
</comment>
<comment type="subunit">
    <text evidence="1">F-type ATPases have 2 components, CF(1) - the catalytic core - and CF(0) - the membrane proton channel. CF(1) has five subunits: alpha(3), beta(3), gamma(1), delta(1), epsilon(1). CF(0) has three main subunits: a(1), b(2) and c(9-12). The alpha and beta chains form an alternating ring which encloses part of the gamma chain. CF(1) is attached to CF(0) by a central stalk formed by the gamma and epsilon chains, while a peripheral stalk is formed by the delta and b chains.</text>
</comment>
<comment type="subcellular location">
    <subcellularLocation>
        <location evidence="1">Cell membrane</location>
        <topology evidence="1">Peripheral membrane protein</topology>
    </subcellularLocation>
</comment>
<comment type="similarity">
    <text evidence="1">Belongs to the ATPase alpha/beta chains family.</text>
</comment>
<accession>Q4AAV7</accession>
<name>ATPB_MESHJ</name>
<proteinExistence type="inferred from homology"/>
<keyword id="KW-0066">ATP synthesis</keyword>
<keyword id="KW-0067">ATP-binding</keyword>
<keyword id="KW-1003">Cell membrane</keyword>
<keyword id="KW-0139">CF(1)</keyword>
<keyword id="KW-0375">Hydrogen ion transport</keyword>
<keyword id="KW-0406">Ion transport</keyword>
<keyword id="KW-0472">Membrane</keyword>
<keyword id="KW-0547">Nucleotide-binding</keyword>
<keyword id="KW-1278">Translocase</keyword>
<keyword id="KW-0813">Transport</keyword>